<organism>
    <name type="scientific">Desulfotalea psychrophila (strain LSv54 / DSM 12343)</name>
    <dbReference type="NCBI Taxonomy" id="177439"/>
    <lineage>
        <taxon>Bacteria</taxon>
        <taxon>Pseudomonadati</taxon>
        <taxon>Thermodesulfobacteriota</taxon>
        <taxon>Desulfobulbia</taxon>
        <taxon>Desulfobulbales</taxon>
        <taxon>Desulfocapsaceae</taxon>
        <taxon>Desulfotalea</taxon>
    </lineage>
</organism>
<protein>
    <recommendedName>
        <fullName evidence="1">Thymidylate kinase</fullName>
        <ecNumber evidence="1">2.7.4.9</ecNumber>
    </recommendedName>
    <alternativeName>
        <fullName evidence="1">dTMP kinase</fullName>
    </alternativeName>
</protein>
<proteinExistence type="inferred from homology"/>
<evidence type="ECO:0000255" key="1">
    <source>
        <dbReference type="HAMAP-Rule" id="MF_00165"/>
    </source>
</evidence>
<reference key="1">
    <citation type="journal article" date="2004" name="Environ. Microbiol.">
        <title>The genome of Desulfotalea psychrophila, a sulfate-reducing bacterium from permanently cold Arctic sediments.</title>
        <authorList>
            <person name="Rabus R."/>
            <person name="Ruepp A."/>
            <person name="Frickey T."/>
            <person name="Rattei T."/>
            <person name="Fartmann B."/>
            <person name="Stark M."/>
            <person name="Bauer M."/>
            <person name="Zibat A."/>
            <person name="Lombardot T."/>
            <person name="Becker I."/>
            <person name="Amann J."/>
            <person name="Gellner K."/>
            <person name="Teeling H."/>
            <person name="Leuschner W.D."/>
            <person name="Gloeckner F.-O."/>
            <person name="Lupas A.N."/>
            <person name="Amann R."/>
            <person name="Klenk H.-P."/>
        </authorList>
    </citation>
    <scope>NUCLEOTIDE SEQUENCE [LARGE SCALE GENOMIC DNA]</scope>
    <source>
        <strain>DSM 12343 / LSv54</strain>
    </source>
</reference>
<dbReference type="EC" id="2.7.4.9" evidence="1"/>
<dbReference type="EMBL" id="CR522870">
    <property type="protein sequence ID" value="CAG37538.1"/>
    <property type="molecule type" value="Genomic_DNA"/>
</dbReference>
<dbReference type="RefSeq" id="WP_011190050.1">
    <property type="nucleotide sequence ID" value="NC_006138.1"/>
</dbReference>
<dbReference type="SMR" id="Q6AJE2"/>
<dbReference type="STRING" id="177439.DP2809"/>
<dbReference type="KEGG" id="dps:DP2809"/>
<dbReference type="eggNOG" id="COG0125">
    <property type="taxonomic scope" value="Bacteria"/>
</dbReference>
<dbReference type="HOGENOM" id="CLU_049131_1_3_7"/>
<dbReference type="OrthoDB" id="9774907at2"/>
<dbReference type="Proteomes" id="UP000000602">
    <property type="component" value="Chromosome"/>
</dbReference>
<dbReference type="GO" id="GO:0005737">
    <property type="term" value="C:cytoplasm"/>
    <property type="evidence" value="ECO:0007669"/>
    <property type="project" value="TreeGrafter"/>
</dbReference>
<dbReference type="GO" id="GO:0005524">
    <property type="term" value="F:ATP binding"/>
    <property type="evidence" value="ECO:0007669"/>
    <property type="project" value="UniProtKB-UniRule"/>
</dbReference>
<dbReference type="GO" id="GO:0004798">
    <property type="term" value="F:dTMP kinase activity"/>
    <property type="evidence" value="ECO:0007669"/>
    <property type="project" value="UniProtKB-UniRule"/>
</dbReference>
<dbReference type="GO" id="GO:0006233">
    <property type="term" value="P:dTDP biosynthetic process"/>
    <property type="evidence" value="ECO:0007669"/>
    <property type="project" value="InterPro"/>
</dbReference>
<dbReference type="GO" id="GO:0006235">
    <property type="term" value="P:dTTP biosynthetic process"/>
    <property type="evidence" value="ECO:0007669"/>
    <property type="project" value="UniProtKB-UniRule"/>
</dbReference>
<dbReference type="GO" id="GO:0006227">
    <property type="term" value="P:dUDP biosynthetic process"/>
    <property type="evidence" value="ECO:0007669"/>
    <property type="project" value="TreeGrafter"/>
</dbReference>
<dbReference type="CDD" id="cd01672">
    <property type="entry name" value="TMPK"/>
    <property type="match status" value="1"/>
</dbReference>
<dbReference type="Gene3D" id="3.40.50.300">
    <property type="entry name" value="P-loop containing nucleotide triphosphate hydrolases"/>
    <property type="match status" value="1"/>
</dbReference>
<dbReference type="HAMAP" id="MF_00165">
    <property type="entry name" value="Thymidylate_kinase"/>
    <property type="match status" value="1"/>
</dbReference>
<dbReference type="InterPro" id="IPR027417">
    <property type="entry name" value="P-loop_NTPase"/>
</dbReference>
<dbReference type="InterPro" id="IPR039430">
    <property type="entry name" value="Thymidylate_kin-like_dom"/>
</dbReference>
<dbReference type="InterPro" id="IPR018095">
    <property type="entry name" value="Thymidylate_kin_CS"/>
</dbReference>
<dbReference type="InterPro" id="IPR018094">
    <property type="entry name" value="Thymidylate_kinase"/>
</dbReference>
<dbReference type="NCBIfam" id="TIGR00041">
    <property type="entry name" value="DTMP_kinase"/>
    <property type="match status" value="1"/>
</dbReference>
<dbReference type="PANTHER" id="PTHR10344">
    <property type="entry name" value="THYMIDYLATE KINASE"/>
    <property type="match status" value="1"/>
</dbReference>
<dbReference type="PANTHER" id="PTHR10344:SF4">
    <property type="entry name" value="UMP-CMP KINASE 2, MITOCHONDRIAL"/>
    <property type="match status" value="1"/>
</dbReference>
<dbReference type="Pfam" id="PF02223">
    <property type="entry name" value="Thymidylate_kin"/>
    <property type="match status" value="1"/>
</dbReference>
<dbReference type="SUPFAM" id="SSF52540">
    <property type="entry name" value="P-loop containing nucleoside triphosphate hydrolases"/>
    <property type="match status" value="1"/>
</dbReference>
<dbReference type="PROSITE" id="PS01331">
    <property type="entry name" value="THYMIDYLATE_KINASE"/>
    <property type="match status" value="1"/>
</dbReference>
<comment type="function">
    <text evidence="1">Phosphorylation of dTMP to form dTDP in both de novo and salvage pathways of dTTP synthesis.</text>
</comment>
<comment type="catalytic activity">
    <reaction evidence="1">
        <text>dTMP + ATP = dTDP + ADP</text>
        <dbReference type="Rhea" id="RHEA:13517"/>
        <dbReference type="ChEBI" id="CHEBI:30616"/>
        <dbReference type="ChEBI" id="CHEBI:58369"/>
        <dbReference type="ChEBI" id="CHEBI:63528"/>
        <dbReference type="ChEBI" id="CHEBI:456216"/>
        <dbReference type="EC" id="2.7.4.9"/>
    </reaction>
</comment>
<comment type="similarity">
    <text evidence="1">Belongs to the thymidylate kinase family.</text>
</comment>
<gene>
    <name evidence="1" type="primary">tmk</name>
    <name type="ordered locus">DP2809</name>
</gene>
<accession>Q6AJE2</accession>
<keyword id="KW-0067">ATP-binding</keyword>
<keyword id="KW-0418">Kinase</keyword>
<keyword id="KW-0545">Nucleotide biosynthesis</keyword>
<keyword id="KW-0547">Nucleotide-binding</keyword>
<keyword id="KW-1185">Reference proteome</keyword>
<keyword id="KW-0808">Transferase</keyword>
<sequence>MSNNPGKLIIFEGTDGAGKSTQIKMLANYLRSKGLDVIASFEPTNGPYGQKIRQLYTDRNKVTRNEELELFLADRREHVNKLINPAISAGKIVLCDRYYLSTAAYQGALGFDVEEILQRNSFAPTPDLALLLQIPVEDGRRRITSSRGEETNDFEKAEMLEKVSTIFNSLSFPYIRHINACQSIDNVQRDIIMQVKQLLKMA</sequence>
<name>KTHY_DESPS</name>
<feature type="chain" id="PRO_0000155267" description="Thymidylate kinase">
    <location>
        <begin position="1"/>
        <end position="202"/>
    </location>
</feature>
<feature type="binding site" evidence="1">
    <location>
        <begin position="13"/>
        <end position="20"/>
    </location>
    <ligand>
        <name>ATP</name>
        <dbReference type="ChEBI" id="CHEBI:30616"/>
    </ligand>
</feature>